<proteinExistence type="inferred from homology"/>
<dbReference type="EC" id="2.1.1.-" evidence="1"/>
<dbReference type="EMBL" id="CP000557">
    <property type="protein sequence ID" value="ABO67783.1"/>
    <property type="molecule type" value="Genomic_DNA"/>
</dbReference>
<dbReference type="RefSeq" id="WP_011887841.1">
    <property type="nucleotide sequence ID" value="NC_009328.1"/>
</dbReference>
<dbReference type="SMR" id="A4IR29"/>
<dbReference type="GeneID" id="87623414"/>
<dbReference type="KEGG" id="gtn:GTNG_2438"/>
<dbReference type="eggNOG" id="COG2264">
    <property type="taxonomic scope" value="Bacteria"/>
</dbReference>
<dbReference type="HOGENOM" id="CLU_049382_0_1_9"/>
<dbReference type="Proteomes" id="UP000001578">
    <property type="component" value="Chromosome"/>
</dbReference>
<dbReference type="GO" id="GO:0005737">
    <property type="term" value="C:cytoplasm"/>
    <property type="evidence" value="ECO:0007669"/>
    <property type="project" value="UniProtKB-SubCell"/>
</dbReference>
<dbReference type="GO" id="GO:0016279">
    <property type="term" value="F:protein-lysine N-methyltransferase activity"/>
    <property type="evidence" value="ECO:0007669"/>
    <property type="project" value="RHEA"/>
</dbReference>
<dbReference type="GO" id="GO:0032259">
    <property type="term" value="P:methylation"/>
    <property type="evidence" value="ECO:0007669"/>
    <property type="project" value="UniProtKB-KW"/>
</dbReference>
<dbReference type="CDD" id="cd02440">
    <property type="entry name" value="AdoMet_MTases"/>
    <property type="match status" value="1"/>
</dbReference>
<dbReference type="Gene3D" id="3.40.50.150">
    <property type="entry name" value="Vaccinia Virus protein VP39"/>
    <property type="match status" value="1"/>
</dbReference>
<dbReference type="HAMAP" id="MF_00735">
    <property type="entry name" value="Methyltr_PrmA"/>
    <property type="match status" value="1"/>
</dbReference>
<dbReference type="InterPro" id="IPR050078">
    <property type="entry name" value="Ribosomal_L11_MeTrfase_PrmA"/>
</dbReference>
<dbReference type="InterPro" id="IPR004498">
    <property type="entry name" value="Ribosomal_PrmA_MeTrfase"/>
</dbReference>
<dbReference type="InterPro" id="IPR029063">
    <property type="entry name" value="SAM-dependent_MTases_sf"/>
</dbReference>
<dbReference type="NCBIfam" id="TIGR00406">
    <property type="entry name" value="prmA"/>
    <property type="match status" value="1"/>
</dbReference>
<dbReference type="PANTHER" id="PTHR43648">
    <property type="entry name" value="ELECTRON TRANSFER FLAVOPROTEIN BETA SUBUNIT LYSINE METHYLTRANSFERASE"/>
    <property type="match status" value="1"/>
</dbReference>
<dbReference type="PANTHER" id="PTHR43648:SF1">
    <property type="entry name" value="ELECTRON TRANSFER FLAVOPROTEIN BETA SUBUNIT LYSINE METHYLTRANSFERASE"/>
    <property type="match status" value="1"/>
</dbReference>
<dbReference type="Pfam" id="PF06325">
    <property type="entry name" value="PrmA"/>
    <property type="match status" value="1"/>
</dbReference>
<dbReference type="PIRSF" id="PIRSF000401">
    <property type="entry name" value="RPL11_MTase"/>
    <property type="match status" value="1"/>
</dbReference>
<dbReference type="SUPFAM" id="SSF53335">
    <property type="entry name" value="S-adenosyl-L-methionine-dependent methyltransferases"/>
    <property type="match status" value="1"/>
</dbReference>
<sequence length="312" mass="34525">MKWSEISIHTTHEAVEAISNILHEAGAGGVVIEDPYDLVKDRDDWYGEIVELNPDDYPEEGVVIKAYLPVNSFLGETVEQIKQAINNLWLYDIDLGKNKITLSEVNEEEWATAWKKHYHPVKVSEKFTIVPTWETYEPASNDELIIEMDPGMAFGTGTHPTTVMCLQALEKYVHPGDNVIDVGTGSGILSIAAAMLGAHSVRALDLDPVAIDSARLNVKLNKVQHVVTVAQNNLLDHIDEQADVIVANILAEIILRFTADAYRLLKPGGRFITSGIIQAKKQDVKDGLLAAGFFIEEVNVMEDWVAFVAIKP</sequence>
<gene>
    <name evidence="1" type="primary">prmA</name>
    <name type="ordered locus">GTNG_2438</name>
</gene>
<evidence type="ECO:0000255" key="1">
    <source>
        <dbReference type="HAMAP-Rule" id="MF_00735"/>
    </source>
</evidence>
<comment type="function">
    <text evidence="1">Methylates ribosomal protein L11.</text>
</comment>
<comment type="catalytic activity">
    <reaction evidence="1">
        <text>L-lysyl-[protein] + 3 S-adenosyl-L-methionine = N(6),N(6),N(6)-trimethyl-L-lysyl-[protein] + 3 S-adenosyl-L-homocysteine + 3 H(+)</text>
        <dbReference type="Rhea" id="RHEA:54192"/>
        <dbReference type="Rhea" id="RHEA-COMP:9752"/>
        <dbReference type="Rhea" id="RHEA-COMP:13826"/>
        <dbReference type="ChEBI" id="CHEBI:15378"/>
        <dbReference type="ChEBI" id="CHEBI:29969"/>
        <dbReference type="ChEBI" id="CHEBI:57856"/>
        <dbReference type="ChEBI" id="CHEBI:59789"/>
        <dbReference type="ChEBI" id="CHEBI:61961"/>
    </reaction>
</comment>
<comment type="subcellular location">
    <subcellularLocation>
        <location evidence="1">Cytoplasm</location>
    </subcellularLocation>
</comment>
<comment type="similarity">
    <text evidence="1">Belongs to the methyltransferase superfamily. PrmA family.</text>
</comment>
<name>PRMA_GEOTN</name>
<feature type="chain" id="PRO_1000046026" description="Ribosomal protein L11 methyltransferase">
    <location>
        <begin position="1"/>
        <end position="312"/>
    </location>
</feature>
<feature type="binding site" evidence="1">
    <location>
        <position position="162"/>
    </location>
    <ligand>
        <name>S-adenosyl-L-methionine</name>
        <dbReference type="ChEBI" id="CHEBI:59789"/>
    </ligand>
</feature>
<feature type="binding site" evidence="1">
    <location>
        <position position="183"/>
    </location>
    <ligand>
        <name>S-adenosyl-L-methionine</name>
        <dbReference type="ChEBI" id="CHEBI:59789"/>
    </ligand>
</feature>
<feature type="binding site" evidence="1">
    <location>
        <position position="205"/>
    </location>
    <ligand>
        <name>S-adenosyl-L-methionine</name>
        <dbReference type="ChEBI" id="CHEBI:59789"/>
    </ligand>
</feature>
<feature type="binding site" evidence="1">
    <location>
        <position position="248"/>
    </location>
    <ligand>
        <name>S-adenosyl-L-methionine</name>
        <dbReference type="ChEBI" id="CHEBI:59789"/>
    </ligand>
</feature>
<keyword id="KW-0963">Cytoplasm</keyword>
<keyword id="KW-0489">Methyltransferase</keyword>
<keyword id="KW-0949">S-adenosyl-L-methionine</keyword>
<keyword id="KW-0808">Transferase</keyword>
<organism>
    <name type="scientific">Geobacillus thermodenitrificans (strain NG80-2)</name>
    <dbReference type="NCBI Taxonomy" id="420246"/>
    <lineage>
        <taxon>Bacteria</taxon>
        <taxon>Bacillati</taxon>
        <taxon>Bacillota</taxon>
        <taxon>Bacilli</taxon>
        <taxon>Bacillales</taxon>
        <taxon>Anoxybacillaceae</taxon>
        <taxon>Geobacillus</taxon>
    </lineage>
</organism>
<protein>
    <recommendedName>
        <fullName evidence="1">Ribosomal protein L11 methyltransferase</fullName>
        <shortName evidence="1">L11 Mtase</shortName>
        <ecNumber evidence="1">2.1.1.-</ecNumber>
    </recommendedName>
</protein>
<reference key="1">
    <citation type="journal article" date="2007" name="Proc. Natl. Acad. Sci. U.S.A.">
        <title>Genome and proteome of long-chain alkane degrading Geobacillus thermodenitrificans NG80-2 isolated from a deep-subsurface oil reservoir.</title>
        <authorList>
            <person name="Feng L."/>
            <person name="Wang W."/>
            <person name="Cheng J."/>
            <person name="Ren Y."/>
            <person name="Zhao G."/>
            <person name="Gao C."/>
            <person name="Tang Y."/>
            <person name="Liu X."/>
            <person name="Han W."/>
            <person name="Peng X."/>
            <person name="Liu R."/>
            <person name="Wang L."/>
        </authorList>
    </citation>
    <scope>NUCLEOTIDE SEQUENCE [LARGE SCALE GENOMIC DNA]</scope>
    <source>
        <strain>NG80-2</strain>
    </source>
</reference>
<accession>A4IR29</accession>